<dbReference type="EMBL" id="AY072800">
    <property type="protein sequence ID" value="AAL67937.1"/>
    <property type="molecule type" value="mRNA"/>
</dbReference>
<dbReference type="EMBL" id="AB098623">
    <property type="protein sequence ID" value="BAD05017.1"/>
    <property type="molecule type" value="mRNA"/>
</dbReference>
<dbReference type="EMBL" id="AK038568">
    <property type="protein sequence ID" value="BAC30047.1"/>
    <property type="molecule type" value="mRNA"/>
</dbReference>
<dbReference type="EMBL" id="AK042634">
    <property type="protein sequence ID" value="BAC31314.1"/>
    <property type="molecule type" value="mRNA"/>
</dbReference>
<dbReference type="EMBL" id="AK046596">
    <property type="protein sequence ID" value="BAC32801.1"/>
    <property type="molecule type" value="mRNA"/>
</dbReference>
<dbReference type="EMBL" id="AF000969">
    <property type="protein sequence ID" value="AAB58720.2"/>
    <property type="status" value="ALT_FRAME"/>
    <property type="molecule type" value="mRNA"/>
</dbReference>
<dbReference type="EMBL" id="BC047394">
    <property type="protein sequence ID" value="AAH47394.1"/>
    <property type="molecule type" value="mRNA"/>
</dbReference>
<dbReference type="EMBL" id="BC055462">
    <property type="protein sequence ID" value="AAH55462.1"/>
    <property type="status" value="ALT_FRAME"/>
    <property type="molecule type" value="mRNA"/>
</dbReference>
<dbReference type="EMBL" id="BC059274">
    <property type="protein sequence ID" value="AAH59274.1"/>
    <property type="status" value="ALT_INIT"/>
    <property type="molecule type" value="mRNA"/>
</dbReference>
<dbReference type="EMBL" id="BC080854">
    <property type="protein sequence ID" value="AAH80854.1"/>
    <property type="molecule type" value="mRNA"/>
</dbReference>
<dbReference type="CCDS" id="CCDS39439.1">
    <molecule id="Q8BYR5-2"/>
</dbReference>
<dbReference type="CCDS" id="CCDS57411.1">
    <molecule id="Q8BYR5-5"/>
</dbReference>
<dbReference type="CCDS" id="CCDS57412.1">
    <molecule id="Q8BYR5-4"/>
</dbReference>
<dbReference type="CCDS" id="CCDS57413.1">
    <molecule id="Q8BYR5-6"/>
</dbReference>
<dbReference type="RefSeq" id="NP_001239034.1">
    <molecule id="Q8BYR5-4"/>
    <property type="nucleotide sequence ID" value="NM_001252105.2"/>
</dbReference>
<dbReference type="RefSeq" id="NP_001239036.1">
    <molecule id="Q8BYR5-6"/>
    <property type="nucleotide sequence ID" value="NM_001252107.2"/>
</dbReference>
<dbReference type="RefSeq" id="NP_001239039.1">
    <molecule id="Q8BYR5-5"/>
    <property type="nucleotide sequence ID" value="NM_001252110.2"/>
</dbReference>
<dbReference type="RefSeq" id="NP_001390559.1">
    <molecule id="Q8BYR5-1"/>
    <property type="nucleotide sequence ID" value="NM_001403630.1"/>
</dbReference>
<dbReference type="RefSeq" id="XP_006505175.1">
    <property type="nucleotide sequence ID" value="XM_006505112.1"/>
</dbReference>
<dbReference type="SMR" id="Q8BYR5"/>
<dbReference type="BioGRID" id="235999">
    <property type="interactions" value="2"/>
</dbReference>
<dbReference type="FunCoup" id="Q8BYR5">
    <property type="interactions" value="630"/>
</dbReference>
<dbReference type="IntAct" id="Q8BYR5">
    <property type="interactions" value="5"/>
</dbReference>
<dbReference type="MINT" id="Q8BYR5"/>
<dbReference type="STRING" id="10090.ENSMUSP00000018122"/>
<dbReference type="GlyGen" id="Q8BYR5">
    <property type="glycosylation" value="4 sites, 3 N-linked glycans (3 sites), 1 O-linked glycan (1 site)"/>
</dbReference>
<dbReference type="iPTMnet" id="Q8BYR5"/>
<dbReference type="PhosphoSitePlus" id="Q8BYR5"/>
<dbReference type="SwissPalm" id="Q8BYR5"/>
<dbReference type="PaxDb" id="10090-ENSMUSP00000018122"/>
<dbReference type="PeptideAtlas" id="Q8BYR5"/>
<dbReference type="ProteomicsDB" id="265658">
    <molecule id="Q8BYR5-1"/>
</dbReference>
<dbReference type="ProteomicsDB" id="265659">
    <molecule id="Q8BYR5-2"/>
</dbReference>
<dbReference type="ProteomicsDB" id="265660">
    <molecule id="Q8BYR5-3"/>
</dbReference>
<dbReference type="ProteomicsDB" id="265661">
    <molecule id="Q8BYR5-4"/>
</dbReference>
<dbReference type="ProteomicsDB" id="265662">
    <molecule id="Q8BYR5-5"/>
</dbReference>
<dbReference type="ProteomicsDB" id="265663">
    <molecule id="Q8BYR5-6"/>
</dbReference>
<dbReference type="ProteomicsDB" id="265664">
    <molecule id="Q8BYR5-7"/>
</dbReference>
<dbReference type="Antibodypedia" id="31729">
    <property type="antibodies" value="57 antibodies from 24 providers"/>
</dbReference>
<dbReference type="DNASU" id="320405"/>
<dbReference type="Ensembl" id="ENSMUST00000018122.14">
    <molecule id="Q8BYR5-2"/>
    <property type="protein sequence ID" value="ENSMUSP00000018122.8"/>
    <property type="gene ID" value="ENSMUSG00000017978.20"/>
</dbReference>
<dbReference type="Ensembl" id="ENSMUST00000115356.3">
    <molecule id="Q8BYR5-6"/>
    <property type="protein sequence ID" value="ENSMUSP00000111013.3"/>
    <property type="gene ID" value="ENSMUSG00000017978.20"/>
</dbReference>
<dbReference type="Ensembl" id="ENSMUST00000115358.9">
    <molecule id="Q8BYR5-4"/>
    <property type="protein sequence ID" value="ENSMUSP00000111015.3"/>
    <property type="gene ID" value="ENSMUSG00000017978.20"/>
</dbReference>
<dbReference type="Ensembl" id="ENSMUST00000115361.9">
    <molecule id="Q8BYR5-5"/>
    <property type="protein sequence ID" value="ENSMUSP00000111018.3"/>
    <property type="gene ID" value="ENSMUSG00000017978.20"/>
</dbReference>
<dbReference type="GeneID" id="320405"/>
<dbReference type="KEGG" id="mmu:320405"/>
<dbReference type="UCSC" id="uc009bbe.2">
    <molecule id="Q8BYR5-4"/>
    <property type="organism name" value="mouse"/>
</dbReference>
<dbReference type="UCSC" id="uc009bbg.2">
    <molecule id="Q8BYR5-5"/>
    <property type="organism name" value="mouse"/>
</dbReference>
<dbReference type="UCSC" id="uc009bbh.3">
    <molecule id="Q8BYR5-6"/>
    <property type="organism name" value="mouse"/>
</dbReference>
<dbReference type="UCSC" id="uc009bbm.2">
    <molecule id="Q8BYR5-7"/>
    <property type="organism name" value="mouse"/>
</dbReference>
<dbReference type="AGR" id="MGI:2443963"/>
<dbReference type="CTD" id="93664"/>
<dbReference type="MGI" id="MGI:2443963">
    <property type="gene designation" value="Cadps2"/>
</dbReference>
<dbReference type="VEuPathDB" id="HostDB:ENSMUSG00000017978"/>
<dbReference type="eggNOG" id="KOG3543">
    <property type="taxonomic scope" value="Eukaryota"/>
</dbReference>
<dbReference type="GeneTree" id="ENSGT00590000083094"/>
<dbReference type="HOGENOM" id="CLU_007068_1_0_1"/>
<dbReference type="InParanoid" id="Q8BYR5"/>
<dbReference type="OMA" id="LSFTLEX"/>
<dbReference type="TreeFam" id="TF312963"/>
<dbReference type="BioGRID-ORCS" id="320405">
    <property type="hits" value="3 hits in 76 CRISPR screens"/>
</dbReference>
<dbReference type="ChiTaRS" id="Cadps2">
    <property type="organism name" value="mouse"/>
</dbReference>
<dbReference type="PRO" id="PR:Q8BYR5"/>
<dbReference type="Proteomes" id="UP000000589">
    <property type="component" value="Chromosome 6"/>
</dbReference>
<dbReference type="RNAct" id="Q8BYR5">
    <property type="molecule type" value="protein"/>
</dbReference>
<dbReference type="Bgee" id="ENSMUSG00000017978">
    <property type="expression patterns" value="Expressed in habenula and 215 other cell types or tissues"/>
</dbReference>
<dbReference type="ExpressionAtlas" id="Q8BYR5">
    <property type="expression patterns" value="baseline and differential"/>
</dbReference>
<dbReference type="GO" id="GO:0005813">
    <property type="term" value="C:centrosome"/>
    <property type="evidence" value="ECO:0000250"/>
    <property type="project" value="UniProtKB"/>
</dbReference>
<dbReference type="GO" id="GO:0036064">
    <property type="term" value="C:ciliary basal body"/>
    <property type="evidence" value="ECO:0000250"/>
    <property type="project" value="UniProtKB"/>
</dbReference>
<dbReference type="GO" id="GO:0005929">
    <property type="term" value="C:cilium"/>
    <property type="evidence" value="ECO:0000250"/>
    <property type="project" value="UniProtKB"/>
</dbReference>
<dbReference type="GO" id="GO:0031410">
    <property type="term" value="C:cytoplasmic vesicle"/>
    <property type="evidence" value="ECO:0000314"/>
    <property type="project" value="MGI"/>
</dbReference>
<dbReference type="GO" id="GO:0030659">
    <property type="term" value="C:cytoplasmic vesicle membrane"/>
    <property type="evidence" value="ECO:0007669"/>
    <property type="project" value="UniProtKB-SubCell"/>
</dbReference>
<dbReference type="GO" id="GO:0098978">
    <property type="term" value="C:glutamatergic synapse"/>
    <property type="evidence" value="ECO:0000314"/>
    <property type="project" value="SynGO"/>
</dbReference>
<dbReference type="GO" id="GO:0005654">
    <property type="term" value="C:nucleoplasm"/>
    <property type="evidence" value="ECO:0007669"/>
    <property type="project" value="Ensembl"/>
</dbReference>
<dbReference type="GO" id="GO:0098688">
    <property type="term" value="C:parallel fiber to Purkinje cell synapse"/>
    <property type="evidence" value="ECO:0000314"/>
    <property type="project" value="SynGO"/>
</dbReference>
<dbReference type="GO" id="GO:0045211">
    <property type="term" value="C:postsynaptic membrane"/>
    <property type="evidence" value="ECO:0000314"/>
    <property type="project" value="MGI"/>
</dbReference>
<dbReference type="GO" id="GO:0098793">
    <property type="term" value="C:presynapse"/>
    <property type="evidence" value="ECO:0000314"/>
    <property type="project" value="SynGO"/>
</dbReference>
<dbReference type="GO" id="GO:0042734">
    <property type="term" value="C:presynaptic membrane"/>
    <property type="evidence" value="ECO:0000314"/>
    <property type="project" value="MGI"/>
</dbReference>
<dbReference type="GO" id="GO:0008289">
    <property type="term" value="F:lipid binding"/>
    <property type="evidence" value="ECO:0007669"/>
    <property type="project" value="UniProtKB-KW"/>
</dbReference>
<dbReference type="GO" id="GO:0046872">
    <property type="term" value="F:metal ion binding"/>
    <property type="evidence" value="ECO:0007669"/>
    <property type="project" value="UniProtKB-KW"/>
</dbReference>
<dbReference type="GO" id="GO:0009267">
    <property type="term" value="P:cellular response to starvation"/>
    <property type="evidence" value="ECO:0000270"/>
    <property type="project" value="MGI"/>
</dbReference>
<dbReference type="GO" id="GO:1990504">
    <property type="term" value="P:dense core granule exocytosis"/>
    <property type="evidence" value="ECO:0007669"/>
    <property type="project" value="InterPro"/>
</dbReference>
<dbReference type="GO" id="GO:0061484">
    <property type="term" value="P:hematopoietic stem cell homeostasis"/>
    <property type="evidence" value="ECO:0000315"/>
    <property type="project" value="MGI"/>
</dbReference>
<dbReference type="GO" id="GO:0045921">
    <property type="term" value="P:positive regulation of exocytosis"/>
    <property type="evidence" value="ECO:0000314"/>
    <property type="project" value="MGI"/>
</dbReference>
<dbReference type="GO" id="GO:0015031">
    <property type="term" value="P:protein transport"/>
    <property type="evidence" value="ECO:0007669"/>
    <property type="project" value="UniProtKB-KW"/>
</dbReference>
<dbReference type="GO" id="GO:0016082">
    <property type="term" value="P:synaptic vesicle priming"/>
    <property type="evidence" value="ECO:0000314"/>
    <property type="project" value="SynGO"/>
</dbReference>
<dbReference type="CDD" id="cd01234">
    <property type="entry name" value="PH_CADPS"/>
    <property type="match status" value="1"/>
</dbReference>
<dbReference type="FunFam" id="2.30.29.30:FF:000007">
    <property type="entry name" value="Calcium-dependent secretion activator 2 isoform B"/>
    <property type="match status" value="1"/>
</dbReference>
<dbReference type="Gene3D" id="2.30.29.30">
    <property type="entry name" value="Pleckstrin-homology domain (PH domain)/Phosphotyrosine-binding domain (PTB)"/>
    <property type="match status" value="1"/>
</dbReference>
<dbReference type="InterPro" id="IPR000008">
    <property type="entry name" value="C2_dom"/>
</dbReference>
<dbReference type="InterPro" id="IPR033227">
    <property type="entry name" value="CAPS"/>
</dbReference>
<dbReference type="InterPro" id="IPR010439">
    <property type="entry name" value="MUN_dom"/>
</dbReference>
<dbReference type="InterPro" id="IPR014770">
    <property type="entry name" value="Munc13_1"/>
</dbReference>
<dbReference type="InterPro" id="IPR011993">
    <property type="entry name" value="PH-like_dom_sf"/>
</dbReference>
<dbReference type="InterPro" id="IPR001849">
    <property type="entry name" value="PH_domain"/>
</dbReference>
<dbReference type="PANTHER" id="PTHR12166">
    <property type="entry name" value="CALCIUM-DEPENDENT SECRETION ACTIVATOR"/>
    <property type="match status" value="1"/>
</dbReference>
<dbReference type="PANTHER" id="PTHR12166:SF7">
    <property type="entry name" value="CALCIUM-DEPENDENT SECRETION ACTIVATOR 2"/>
    <property type="match status" value="1"/>
</dbReference>
<dbReference type="Pfam" id="PF25341">
    <property type="entry name" value="C2_CAPS"/>
    <property type="match status" value="1"/>
</dbReference>
<dbReference type="Pfam" id="PF06292">
    <property type="entry name" value="MUN"/>
    <property type="match status" value="2"/>
</dbReference>
<dbReference type="Pfam" id="PF00169">
    <property type="entry name" value="PH"/>
    <property type="match status" value="1"/>
</dbReference>
<dbReference type="SMART" id="SM01145">
    <property type="entry name" value="DUF1041"/>
    <property type="match status" value="1"/>
</dbReference>
<dbReference type="SMART" id="SM00233">
    <property type="entry name" value="PH"/>
    <property type="match status" value="1"/>
</dbReference>
<dbReference type="SUPFAM" id="SSF50729">
    <property type="entry name" value="PH domain-like"/>
    <property type="match status" value="1"/>
</dbReference>
<dbReference type="PROSITE" id="PS50004">
    <property type="entry name" value="C2"/>
    <property type="match status" value="1"/>
</dbReference>
<dbReference type="PROSITE" id="PS51258">
    <property type="entry name" value="MHD1"/>
    <property type="match status" value="1"/>
</dbReference>
<dbReference type="PROSITE" id="PS50003">
    <property type="entry name" value="PH_DOMAIN"/>
    <property type="match status" value="1"/>
</dbReference>
<organism>
    <name type="scientific">Mus musculus</name>
    <name type="common">Mouse</name>
    <dbReference type="NCBI Taxonomy" id="10090"/>
    <lineage>
        <taxon>Eukaryota</taxon>
        <taxon>Metazoa</taxon>
        <taxon>Chordata</taxon>
        <taxon>Craniata</taxon>
        <taxon>Vertebrata</taxon>
        <taxon>Euteleostomi</taxon>
        <taxon>Mammalia</taxon>
        <taxon>Eutheria</taxon>
        <taxon>Euarchontoglires</taxon>
        <taxon>Glires</taxon>
        <taxon>Rodentia</taxon>
        <taxon>Myomorpha</taxon>
        <taxon>Muroidea</taxon>
        <taxon>Muridae</taxon>
        <taxon>Murinae</taxon>
        <taxon>Mus</taxon>
        <taxon>Mus</taxon>
    </lineage>
</organism>
<gene>
    <name type="primary">Cadps2</name>
    <name type="synonym">Caps2</name>
</gene>
<proteinExistence type="evidence at protein level"/>
<sequence length="1297" mass="147841">MLDPSSSEEESDEGLEEESREVLVAPGVSQRAPPAAAREGRRDAPGRSGGGSGGGAARPVSPSPSVLSEGRNEPELQLDEEQERRIRLQLYVFVVRCIAYPFNAKQPTDMARRQQKLNKQQLQLLKERFQAFLNGETQIVADEAFCNAVRSYYEVFLKSDRVARMVQSGGCSANDFREVFKKNIEKRVRSLPEIDGLSKETVLSSWIAKYDAIYRGEEDLCKQPNRMTLSAVSELILSKEQLYEMFQQILGIKKLEHQLLYNACQLDNADEQAAQIRRELDGRLQLAEKMAKERRFPRFISKEMESMYIEELRASVNLLMANLESLPVSKGGPEFKLQKLKRSQNSAFLDLGDENEIQLSKSDVVLSFTLEIVIMEVQGLKSVAPNRIVYCTMEVEGGEKLQTDQAEASRPQWGTQGDFNTTHPRPVVKVKLFTESTGVLALEDKELGRVVLYPTSNSSKSAELHRMTVPKNSQDSDLKIKLAVRMDKPAHMKHSGYLYALGQKVWKRWKKRYFVLVQVSQYTFAMCSYREKKSEPQELMQLEGYTVDYTDPHPGLQGGQVFFNAVKEGDTVIFASDDEQDRILWVQAMYRATGQSYKPVPAVQSQKLNPKGGALHADAQLYADRFQKHGMDEFISASPCKLDHAFLFRILQRQTLDHRLNDSYSCLGWFSPGQVFVLDEYCARYGVRGCHRHLCYLTELMEHSENGAVIDPTLLHYSFAFCASHVHGNRPDGIGTVSVEEKERFEEIKDRLSSLLENQISHFRYCFPFGRPEGALKATLSLLERVLMKDIATPIPAEEVKKVVRKCLEKAALINYTRLTEYAKIEETMNQATPARKLEEVLHLAELCIEVLQQNEEHHAEGREAFAWWPDLLAEHAEKFWALFTVDMDTALEAQPQDSWDSFPLFQLLNNFLRNDTLLCNGKFHKHLQEIFVPLVVRYVDLMESAIAQSIHRGFEQETWQPVKNIANSLPNVALPKVPSLPLNLPQIPSFSTPPWMASLYESTNGSTTSEDLFWKLDALQMFVFDLHWPEQEFAHHLEQRLKLMASDMIEACVKRTRTAFELKLQKANKTTDLRIPASVCTMFNVLVDAKKQSTKLCALDGGQEQQYHSKIDDLIDNTVKEIIALLVSKFVSVLEGVLSKLSRYDEGTFFSSILSFTVKAAAKYVDVPKPGMDLADTYIMFVRQNQDILREKVNEEMYIEKLFDQWYSNSMKVICVWLADRLDLQLHIYQLKTLIKIVKKTYRDFRLQGVLEGTLNSKTYDTLHRRLTVEEATASVSEGGGLQGITMKDSDEEEEG</sequence>
<evidence type="ECO:0000250" key="1"/>
<evidence type="ECO:0000250" key="2">
    <source>
        <dbReference type="UniProtKB" id="Q86UW7"/>
    </source>
</evidence>
<evidence type="ECO:0000255" key="3">
    <source>
        <dbReference type="PROSITE-ProRule" id="PRU00041"/>
    </source>
</evidence>
<evidence type="ECO:0000255" key="4">
    <source>
        <dbReference type="PROSITE-ProRule" id="PRU00145"/>
    </source>
</evidence>
<evidence type="ECO:0000255" key="5">
    <source>
        <dbReference type="PROSITE-ProRule" id="PRU00587"/>
    </source>
</evidence>
<evidence type="ECO:0000256" key="6">
    <source>
        <dbReference type="SAM" id="MobiDB-lite"/>
    </source>
</evidence>
<evidence type="ECO:0000269" key="7">
    <source>
    </source>
</evidence>
<evidence type="ECO:0000269" key="8">
    <source>
    </source>
</evidence>
<evidence type="ECO:0000303" key="9">
    <source>
    </source>
</evidence>
<evidence type="ECO:0000303" key="10">
    <source>
    </source>
</evidence>
<evidence type="ECO:0000303" key="11">
    <source>
    </source>
</evidence>
<evidence type="ECO:0000303" key="12">
    <source>
    </source>
</evidence>
<evidence type="ECO:0000303" key="13">
    <source ref="4"/>
</evidence>
<evidence type="ECO:0000305" key="14"/>
<evidence type="ECO:0007744" key="15">
    <source>
    </source>
</evidence>
<accession>Q8BYR5</accession>
<accession>O08903</accession>
<accession>Q66JM7</accession>
<accession>Q6PCL7</accession>
<accession>Q76I88</accession>
<accession>Q7TMM6</accession>
<accession>Q80ZV8</accession>
<accession>Q8BL25</accession>
<accession>Q8BY04</accession>
<accession>Q8K3K6</accession>
<reference key="1">
    <citation type="journal article" date="2003" name="Genomics">
        <title>Cloning and characterization of human CADPS and CADPS2, new members of the Ca2+-dependent activator for secretion protein family.</title>
        <authorList>
            <person name="Cisternas F.A."/>
            <person name="Vincent J.B."/>
            <person name="Scherer S.W."/>
            <person name="Ray P.N."/>
        </authorList>
    </citation>
    <scope>NUCLEOTIDE SEQUENCE [MRNA] (ISOFORM 3)</scope>
</reference>
<reference key="2">
    <citation type="journal article" date="2004" name="J. Neurosci.">
        <title>The secretory granule-associated protein CAPS2 regulates neurotrophin release and cell survival.</title>
        <authorList>
            <person name="Sadakata T."/>
            <person name="Mizoguchi A."/>
            <person name="Sato Y."/>
            <person name="Katoh-Semba R."/>
            <person name="Fukuda M."/>
            <person name="Mikoshiba K."/>
            <person name="Furuichi T."/>
        </authorList>
    </citation>
    <scope>NUCLEOTIDE SEQUENCE [MRNA] (ISOFORM 4)</scope>
    <source>
        <strain>C57BL/6J</strain>
        <tissue>Cerebellum</tissue>
    </source>
</reference>
<reference key="3">
    <citation type="journal article" date="2005" name="Science">
        <title>The transcriptional landscape of the mammalian genome.</title>
        <authorList>
            <person name="Carninci P."/>
            <person name="Kasukawa T."/>
            <person name="Katayama S."/>
            <person name="Gough J."/>
            <person name="Frith M.C."/>
            <person name="Maeda N."/>
            <person name="Oyama R."/>
            <person name="Ravasi T."/>
            <person name="Lenhard B."/>
            <person name="Wells C."/>
            <person name="Kodzius R."/>
            <person name="Shimokawa K."/>
            <person name="Bajic V.B."/>
            <person name="Brenner S.E."/>
            <person name="Batalov S."/>
            <person name="Forrest A.R."/>
            <person name="Zavolan M."/>
            <person name="Davis M.J."/>
            <person name="Wilming L.G."/>
            <person name="Aidinis V."/>
            <person name="Allen J.E."/>
            <person name="Ambesi-Impiombato A."/>
            <person name="Apweiler R."/>
            <person name="Aturaliya R.N."/>
            <person name="Bailey T.L."/>
            <person name="Bansal M."/>
            <person name="Baxter L."/>
            <person name="Beisel K.W."/>
            <person name="Bersano T."/>
            <person name="Bono H."/>
            <person name="Chalk A.M."/>
            <person name="Chiu K.P."/>
            <person name="Choudhary V."/>
            <person name="Christoffels A."/>
            <person name="Clutterbuck D.R."/>
            <person name="Crowe M.L."/>
            <person name="Dalla E."/>
            <person name="Dalrymple B.P."/>
            <person name="de Bono B."/>
            <person name="Della Gatta G."/>
            <person name="di Bernardo D."/>
            <person name="Down T."/>
            <person name="Engstrom P."/>
            <person name="Fagiolini M."/>
            <person name="Faulkner G."/>
            <person name="Fletcher C.F."/>
            <person name="Fukushima T."/>
            <person name="Furuno M."/>
            <person name="Futaki S."/>
            <person name="Gariboldi M."/>
            <person name="Georgii-Hemming P."/>
            <person name="Gingeras T.R."/>
            <person name="Gojobori T."/>
            <person name="Green R.E."/>
            <person name="Gustincich S."/>
            <person name="Harbers M."/>
            <person name="Hayashi Y."/>
            <person name="Hensch T.K."/>
            <person name="Hirokawa N."/>
            <person name="Hill D."/>
            <person name="Huminiecki L."/>
            <person name="Iacono M."/>
            <person name="Ikeo K."/>
            <person name="Iwama A."/>
            <person name="Ishikawa T."/>
            <person name="Jakt M."/>
            <person name="Kanapin A."/>
            <person name="Katoh M."/>
            <person name="Kawasawa Y."/>
            <person name="Kelso J."/>
            <person name="Kitamura H."/>
            <person name="Kitano H."/>
            <person name="Kollias G."/>
            <person name="Krishnan S.P."/>
            <person name="Kruger A."/>
            <person name="Kummerfeld S.K."/>
            <person name="Kurochkin I.V."/>
            <person name="Lareau L.F."/>
            <person name="Lazarevic D."/>
            <person name="Lipovich L."/>
            <person name="Liu J."/>
            <person name="Liuni S."/>
            <person name="McWilliam S."/>
            <person name="Madan Babu M."/>
            <person name="Madera M."/>
            <person name="Marchionni L."/>
            <person name="Matsuda H."/>
            <person name="Matsuzawa S."/>
            <person name="Miki H."/>
            <person name="Mignone F."/>
            <person name="Miyake S."/>
            <person name="Morris K."/>
            <person name="Mottagui-Tabar S."/>
            <person name="Mulder N."/>
            <person name="Nakano N."/>
            <person name="Nakauchi H."/>
            <person name="Ng P."/>
            <person name="Nilsson R."/>
            <person name="Nishiguchi S."/>
            <person name="Nishikawa S."/>
            <person name="Nori F."/>
            <person name="Ohara O."/>
            <person name="Okazaki Y."/>
            <person name="Orlando V."/>
            <person name="Pang K.C."/>
            <person name="Pavan W.J."/>
            <person name="Pavesi G."/>
            <person name="Pesole G."/>
            <person name="Petrovsky N."/>
            <person name="Piazza S."/>
            <person name="Reed J."/>
            <person name="Reid J.F."/>
            <person name="Ring B.Z."/>
            <person name="Ringwald M."/>
            <person name="Rost B."/>
            <person name="Ruan Y."/>
            <person name="Salzberg S.L."/>
            <person name="Sandelin A."/>
            <person name="Schneider C."/>
            <person name="Schoenbach C."/>
            <person name="Sekiguchi K."/>
            <person name="Semple C.A."/>
            <person name="Seno S."/>
            <person name="Sessa L."/>
            <person name="Sheng Y."/>
            <person name="Shibata Y."/>
            <person name="Shimada H."/>
            <person name="Shimada K."/>
            <person name="Silva D."/>
            <person name="Sinclair B."/>
            <person name="Sperling S."/>
            <person name="Stupka E."/>
            <person name="Sugiura K."/>
            <person name="Sultana R."/>
            <person name="Takenaka Y."/>
            <person name="Taki K."/>
            <person name="Tammoja K."/>
            <person name="Tan S.L."/>
            <person name="Tang S."/>
            <person name="Taylor M.S."/>
            <person name="Tegner J."/>
            <person name="Teichmann S.A."/>
            <person name="Ueda H.R."/>
            <person name="van Nimwegen E."/>
            <person name="Verardo R."/>
            <person name="Wei C.L."/>
            <person name="Yagi K."/>
            <person name="Yamanishi H."/>
            <person name="Zabarovsky E."/>
            <person name="Zhu S."/>
            <person name="Zimmer A."/>
            <person name="Hide W."/>
            <person name="Bult C."/>
            <person name="Grimmond S.M."/>
            <person name="Teasdale R.D."/>
            <person name="Liu E.T."/>
            <person name="Brusic V."/>
            <person name="Quackenbush J."/>
            <person name="Wahlestedt C."/>
            <person name="Mattick J.S."/>
            <person name="Hume D.A."/>
            <person name="Kai C."/>
            <person name="Sasaki D."/>
            <person name="Tomaru Y."/>
            <person name="Fukuda S."/>
            <person name="Kanamori-Katayama M."/>
            <person name="Suzuki M."/>
            <person name="Aoki J."/>
            <person name="Arakawa T."/>
            <person name="Iida J."/>
            <person name="Imamura K."/>
            <person name="Itoh M."/>
            <person name="Kato T."/>
            <person name="Kawaji H."/>
            <person name="Kawagashira N."/>
            <person name="Kawashima T."/>
            <person name="Kojima M."/>
            <person name="Kondo S."/>
            <person name="Konno H."/>
            <person name="Nakano K."/>
            <person name="Ninomiya N."/>
            <person name="Nishio T."/>
            <person name="Okada M."/>
            <person name="Plessy C."/>
            <person name="Shibata K."/>
            <person name="Shiraki T."/>
            <person name="Suzuki S."/>
            <person name="Tagami M."/>
            <person name="Waki K."/>
            <person name="Watahiki A."/>
            <person name="Okamura-Oho Y."/>
            <person name="Suzuki H."/>
            <person name="Kawai J."/>
            <person name="Hayashizaki Y."/>
        </authorList>
    </citation>
    <scope>NUCLEOTIDE SEQUENCE [LARGE SCALE MRNA] (ISOFORMS 2; 6 AND 7)</scope>
    <source>
        <strain>C57BL/6J</strain>
        <tissue>Adipose tissue</tissue>
        <tissue>Hypothalamus</tissue>
    </source>
</reference>
<reference key="4">
    <citation type="submission" date="2001-09" db="EMBL/GenBank/DDBJ databases">
        <title>Differentially expressed mRNA in mouse cerebellum during postnatal development.</title>
        <authorList>
            <person name="Radrizzani M."/>
            <person name="Cafferata E."/>
            <person name="Vila-Ortiz G."/>
            <person name="Costanzo R.V."/>
            <person name="Ortega M.J."/>
            <person name="Gonzalez-Guerrico A."/>
            <person name="Di Tella M."/>
            <person name="Pivetta O."/>
            <person name="Carminatti H."/>
            <person name="Santa-Coloma T."/>
        </authorList>
    </citation>
    <scope>NUCLEOTIDE SEQUENCE [MRNA] OF 31-1297 (ISOFORM 2)</scope>
    <source>
        <strain>C57BL/6J</strain>
        <tissue>Cerebellum</tissue>
    </source>
</reference>
<reference key="5">
    <citation type="journal article" date="2004" name="Genome Res.">
        <title>The status, quality, and expansion of the NIH full-length cDNA project: the Mammalian Gene Collection (MGC).</title>
        <authorList>
            <consortium name="The MGC Project Team"/>
        </authorList>
    </citation>
    <scope>NUCLEOTIDE SEQUENCE [LARGE SCALE MRNA] OF 31-1297 (ISOFORM 5)</scope>
    <scope>NUCLEOTIDE SEQUENCE [LARGE SCALE MRNA] OF 136-1297 (ISOFORM 2)</scope>
    <scope>NUCLEOTIDE SEQUENCE [LARGE SCALE MRNA] OF 313-1297 (ISOFORM 6)</scope>
    <source>
        <strain>Czech II</strain>
        <strain>FVB/N</strain>
        <tissue>Mammary tumor</tissue>
        <tissue>Salivary gland</tissue>
    </source>
</reference>
<reference key="6">
    <citation type="journal article" date="2003" name="J. Biol. Chem.">
        <title>A family of Ca2+-dependent activator proteins for secretion: comparative analysis of structure, expression, localization, and function.</title>
        <authorList>
            <person name="Speidel D."/>
            <person name="Varoqueaux F."/>
            <person name="Enk C."/>
            <person name="Nojiri M."/>
            <person name="Grishanin R.N."/>
            <person name="Martin T.F.J."/>
            <person name="Hofmann K."/>
            <person name="Brose N."/>
            <person name="Reim K."/>
        </authorList>
    </citation>
    <scope>SUBCELLULAR LOCATION</scope>
    <scope>TISSUE SPECIFICITY</scope>
</reference>
<reference key="7">
    <citation type="journal article" date="2005" name="Neuron">
        <title>CAPS1 regulates catecholamine loading of large dense-core vesicles.</title>
        <authorList>
            <person name="Speidel D."/>
            <person name="Bruederle C.E."/>
            <person name="Enk C."/>
            <person name="Voets T."/>
            <person name="Varoqueaux F."/>
            <person name="Reim K."/>
            <person name="Becherer U."/>
            <person name="Fornai F."/>
            <person name="Ruggieri S."/>
            <person name="Holighaus Y."/>
            <person name="Weihe E."/>
            <person name="Bruns D."/>
            <person name="Brose N."/>
            <person name="Rettig J."/>
        </authorList>
    </citation>
    <scope>SUBCELLULAR LOCATION</scope>
    <scope>TISSUE SPECIFICITY</scope>
</reference>
<reference key="8">
    <citation type="journal article" date="2010" name="Cell">
        <title>A tissue-specific atlas of mouse protein phosphorylation and expression.</title>
        <authorList>
            <person name="Huttlin E.L."/>
            <person name="Jedrychowski M.P."/>
            <person name="Elias J.E."/>
            <person name="Goswami T."/>
            <person name="Rad R."/>
            <person name="Beausoleil S.A."/>
            <person name="Villen J."/>
            <person name="Haas W."/>
            <person name="Sowa M.E."/>
            <person name="Gygi S.P."/>
        </authorList>
    </citation>
    <scope>PHOSPHORYLATION [LARGE SCALE ANALYSIS] AT SER-61 AND SER-1291</scope>
    <scope>IDENTIFICATION BY MASS SPECTROMETRY [LARGE SCALE ANALYSIS]</scope>
    <source>
        <tissue>Brain</tissue>
        <tissue>Kidney</tissue>
        <tissue>Pancreas</tissue>
    </source>
</reference>
<protein>
    <recommendedName>
        <fullName>Calcium-dependent secretion activator 2</fullName>
    </recommendedName>
    <alternativeName>
        <fullName>Calcium-dependent activator protein for secretion 2</fullName>
        <shortName>CAPS-2</shortName>
    </alternativeName>
</protein>
<feature type="chain" id="PRO_0000053869" description="Calcium-dependent secretion activator 2">
    <location>
        <begin position="1"/>
        <end position="1297"/>
    </location>
</feature>
<feature type="domain" description="DM10" evidence="2">
    <location>
        <begin position="296"/>
        <end position="404"/>
    </location>
</feature>
<feature type="domain" description="C2" evidence="3">
    <location>
        <begin position="353"/>
        <end position="468"/>
    </location>
</feature>
<feature type="domain" description="PH" evidence="4">
    <location>
        <begin position="491"/>
        <end position="594"/>
    </location>
</feature>
<feature type="domain" description="MHD1" evidence="5">
    <location>
        <begin position="886"/>
        <end position="1057"/>
    </location>
</feature>
<feature type="region of interest" description="Disordered" evidence="6">
    <location>
        <begin position="1"/>
        <end position="78"/>
    </location>
</feature>
<feature type="region of interest" description="Interaction with DRD2" evidence="1">
    <location>
        <begin position="756"/>
        <end position="1075"/>
    </location>
</feature>
<feature type="region of interest" description="Disordered" evidence="6">
    <location>
        <begin position="1275"/>
        <end position="1297"/>
    </location>
</feature>
<feature type="compositionally biased region" description="Acidic residues" evidence="6">
    <location>
        <begin position="1"/>
        <end position="19"/>
    </location>
</feature>
<feature type="compositionally biased region" description="Gly residues" evidence="6">
    <location>
        <begin position="47"/>
        <end position="56"/>
    </location>
</feature>
<feature type="modified residue" description="Phosphoserine" evidence="15">
    <location>
        <position position="61"/>
    </location>
</feature>
<feature type="modified residue" description="Phosphoserine" evidence="15">
    <location>
        <position position="1291"/>
    </location>
</feature>
<feature type="splice variant" id="VSP_016819" description="In isoform 3." evidence="9">
    <original>PGVSQRAPPAAAREGRRDAPGRSGGGSGGG</original>
    <variation>R</variation>
    <location>
        <begin position="26"/>
        <end position="55"/>
    </location>
</feature>
<feature type="splice variant" id="VSP_016820" description="In isoform 7." evidence="12">
    <original>FLKSDRVARMVQSGGCSA</original>
    <variation>SLQSCFGTVVLSKTISLV</variation>
    <location>
        <begin position="156"/>
        <end position="173"/>
    </location>
</feature>
<feature type="splice variant" id="VSP_016821" description="In isoform 7." evidence="12">
    <location>
        <begin position="174"/>
        <end position="1297"/>
    </location>
</feature>
<feature type="splice variant" id="VSP_016822" description="In isoform 6." evidence="11 12">
    <original>PDGIGTVSVEEKERFEEIKDRLSSLLENQISHFRYCFP</original>
    <variation>FLSFFFFFFFPQSCVSFRLFTEWQSVEGTQRSEHPDSN</variation>
    <location>
        <begin position="731"/>
        <end position="768"/>
    </location>
</feature>
<feature type="splice variant" id="VSP_016823" description="In isoform 6." evidence="11 12">
    <location>
        <begin position="769"/>
        <end position="1297"/>
    </location>
</feature>
<feature type="splice variant" id="VSP_016824" description="In isoform 2, isoform 3 and isoform 4." evidence="9 10 11 12 13">
    <original>E</original>
    <variation>EGPAEKET</variation>
    <location>
        <position position="826"/>
    </location>
</feature>
<feature type="splice variant" id="VSP_016825" description="In isoform 5." evidence="11">
    <location>
        <begin position="861"/>
        <end position="863"/>
    </location>
</feature>
<feature type="splice variant" id="VSP_016826" description="In isoform 4 and isoform 5." evidence="10 11">
    <original>KNIANSLPNVALPKVPSLPLNLPQIPSFSTPPWMASLYEST</original>
    <variation>N</variation>
    <location>
        <begin position="964"/>
        <end position="1004"/>
    </location>
</feature>
<feature type="splice variant" id="VSP_016827" description="In isoform 5." evidence="11">
    <original>E</original>
    <variation>EFRNQW</variation>
    <location>
        <position position="1105"/>
    </location>
</feature>
<feature type="sequence conflict" description="In Ref. 3; BAC30047." evidence="14" ref="3">
    <original>A</original>
    <variation>V</variation>
    <location>
        <position position="99"/>
    </location>
</feature>
<feature type="sequence conflict" description="In Ref. 3; BAC30047." evidence="14" ref="3">
    <original>Q</original>
    <variation>H</variation>
    <location>
        <position position="106"/>
    </location>
</feature>
<feature type="sequence conflict" description="In Ref. 1; AAL67937." evidence="14" ref="1">
    <original>LN</original>
    <variation>SQ</variation>
    <location>
        <begin position="133"/>
        <end position="134"/>
    </location>
</feature>
<feature type="sequence conflict" description="In Ref. 3; BAC32801." evidence="14" ref="3">
    <original>V</original>
    <variation>M</variation>
    <location>
        <position position="162"/>
    </location>
</feature>
<feature type="sequence conflict" description="In Ref. 4; AAB58720." evidence="14" ref="4">
    <original>PQ</original>
    <variation>AK</variation>
    <location>
        <begin position="411"/>
        <end position="412"/>
    </location>
</feature>
<feature type="sequence conflict" description="In Ref. 4; AAB58720." evidence="14" ref="4">
    <original>K</original>
    <variation>E</variation>
    <location>
        <position position="493"/>
    </location>
</feature>
<feature type="sequence conflict" description="In Ref. 4; AAB58720." evidence="14" ref="4">
    <original>V</original>
    <variation>E</variation>
    <location>
        <position position="517"/>
    </location>
</feature>
<feature type="sequence conflict" description="In Ref. 4; AAB58720." evidence="14" ref="4">
    <original>R</original>
    <variation>P</variation>
    <location>
        <position position="684"/>
    </location>
</feature>
<feature type="sequence conflict" description="In Ref. 4; AAB58720." evidence="14" ref="4">
    <original>C</original>
    <variation>F</variation>
    <location>
        <position position="690"/>
    </location>
</feature>
<feature type="sequence conflict" description="In Ref. 4; AAB58720." evidence="14" ref="4">
    <original>E</original>
    <variation>G</variation>
    <location>
        <position position="702"/>
    </location>
</feature>
<feature type="sequence conflict" description="In Ref. 4; AAB58720." evidence="14" ref="4">
    <original>D</original>
    <variation>N</variation>
    <location>
        <position position="1073"/>
    </location>
</feature>
<feature type="sequence conflict" description="In Ref. 5; AAH59274." evidence="14" ref="5">
    <original>D</original>
    <variation>E</variation>
    <location>
        <position position="1292"/>
    </location>
</feature>
<comment type="function">
    <text>Calcium-binding protein involved in exocytosis of vesicles filled with neurotransmitters and neuropeptides. Probably acts upstream of fusion in the biogenesis or maintenance of mature secretory vesicles. Regulates neurotrophin release from granule cells leading to regulate cell differentiation and survival during cerebellar development. May specifically mediate the Ca(2+)-dependent exocytosis of large dense-core vesicles (DCVs) and other dense-core vesicles.</text>
</comment>
<comment type="subunit">
    <text evidence="1">Homodimer. Interacts with the dopamine receptor DRD2 (By similarity).</text>
</comment>
<comment type="interaction">
    <interactant intactId="EBI-7569313">
        <id>Q8BYR5</id>
    </interactant>
    <interactant intactId="EBI-7569554">
        <id>P61750</id>
        <label>Arf4</label>
    </interactant>
    <organismsDiffer>false</organismsDiffer>
    <experiments>2</experiments>
</comment>
<comment type="interaction">
    <interactant intactId="EBI-7569313">
        <id>Q8BYR5</id>
    </interactant>
    <interactant intactId="EBI-7569461">
        <id>P84084</id>
        <label>Arf5</label>
    </interactant>
    <organismsDiffer>false</organismsDiffer>
    <experiments>5</experiments>
</comment>
<comment type="subcellular location">
    <subcellularLocation>
        <location evidence="14">Cytoplasmic vesicle membrane</location>
        <topology evidence="14">Peripheral membrane protein</topology>
        <orientation evidence="14">Cytoplasmic side</orientation>
    </subcellularLocation>
    <subcellularLocation>
        <location evidence="7 8">Synapse</location>
    </subcellularLocation>
    <subcellularLocation>
        <location evidence="2">Cell projection</location>
        <location evidence="2">Cilium</location>
    </subcellularLocation>
    <subcellularLocation>
        <location evidence="2">Cytoplasm</location>
        <location evidence="2">Cytoskeleton</location>
        <location evidence="2">Cilium basal body</location>
    </subcellularLocation>
    <subcellularLocation>
        <location evidence="2">Cytoplasm</location>
        <location evidence="2">Cytoskeleton</location>
        <location evidence="2">Microtubule organizing center</location>
        <location evidence="2">Centrosome</location>
    </subcellularLocation>
    <text>Membrane-associated to vesicles. Strongly enriched in synaptic fractions. Probably localizes to different vesicles compared to CADPS. Enriched on vesicular structures in the parallel fiber terminal of granule cells that are distinct from synaptic vesicles.</text>
</comment>
<comment type="alternative products">
    <event type="alternative splicing"/>
    <isoform>
        <id>Q8BYR5-1</id>
        <name>1</name>
        <sequence type="displayed"/>
    </isoform>
    <isoform>
        <id>Q8BYR5-2</id>
        <name>2</name>
        <sequence type="described" ref="VSP_016824"/>
    </isoform>
    <isoform>
        <id>Q8BYR5-3</id>
        <name>3</name>
        <name>CAPS2b</name>
        <sequence type="described" ref="VSP_016819 VSP_016824"/>
    </isoform>
    <isoform>
        <id>Q8BYR5-4</id>
        <name>4</name>
        <sequence type="described" ref="VSP_016824 VSP_016826"/>
    </isoform>
    <isoform>
        <id>Q8BYR5-5</id>
        <name>5</name>
        <sequence type="described" ref="VSP_016825 VSP_016826 VSP_016827"/>
    </isoform>
    <isoform>
        <id>Q8BYR5-6</id>
        <name>6</name>
        <sequence type="described" ref="VSP_016822 VSP_016823"/>
    </isoform>
    <isoform>
        <id>Q8BYR5-7</id>
        <name>7</name>
        <sequence type="described" ref="VSP_016820 VSP_016821"/>
    </isoform>
</comment>
<comment type="tissue specificity">
    <text evidence="7 8">Highly expressed in cerebellum. Also expressed in non-neuronal tissues such as lung, spleen, testis, uterus and ovary. Highly expressed in brain. In brain, it is highly expressed in cerebellum, cortex, olfactory bulb, CA1/CA2 regions of the hippocampus, and dentate gyrus, and weakly or not expressed in the CA3 regions of the hippocampus, striatum, thalamus, superior and inferior colliculi, and brain stem. Not present in adult adrenal glands. Isoform 4, but not isoform 3, is highly expressed in postnatal and adult stages of cerebellum.</text>
</comment>
<comment type="developmental stage">
    <text>Expressed at stable level during brain development, with a higher level in embryonic brain.</text>
</comment>
<comment type="domain">
    <text evidence="1">The PH domain is essential for regulated exocytosis and binds phospholipids.</text>
</comment>
<comment type="sequence caution" evidence="14">
    <conflict type="frameshift">
        <sequence resource="EMBL-CDS" id="AAB58720"/>
    </conflict>
</comment>
<comment type="sequence caution" evidence="14">
    <conflict type="erroneous initiation">
        <sequence resource="EMBL-CDS" id="AAH59274"/>
    </conflict>
</comment>
<comment type="sequence caution" evidence="14">
    <molecule>Isoform 6</molecule>
    <conflict type="frameshift">
        <sequence resource="EMBL-CDS" id="AAH55462"/>
    </conflict>
</comment>
<name>CAPS2_MOUSE</name>
<keyword id="KW-0025">Alternative splicing</keyword>
<keyword id="KW-0106">Calcium</keyword>
<keyword id="KW-0966">Cell projection</keyword>
<keyword id="KW-0963">Cytoplasm</keyword>
<keyword id="KW-0968">Cytoplasmic vesicle</keyword>
<keyword id="KW-0206">Cytoskeleton</keyword>
<keyword id="KW-0268">Exocytosis</keyword>
<keyword id="KW-0446">Lipid-binding</keyword>
<keyword id="KW-0472">Membrane</keyword>
<keyword id="KW-0479">Metal-binding</keyword>
<keyword id="KW-0597">Phosphoprotein</keyword>
<keyword id="KW-0653">Protein transport</keyword>
<keyword id="KW-1185">Reference proteome</keyword>
<keyword id="KW-0770">Synapse</keyword>
<keyword id="KW-0813">Transport</keyword>